<geneLocation type="chloroplast"/>
<name>RR3_OENEH</name>
<gene>
    <name type="primary">rps3</name>
</gene>
<comment type="subunit">
    <text evidence="1">Part of the 30S ribosomal subunit.</text>
</comment>
<comment type="subcellular location">
    <subcellularLocation>
        <location>Plastid</location>
        <location>Chloroplast</location>
    </subcellularLocation>
</comment>
<comment type="similarity">
    <text evidence="2">Belongs to the universal ribosomal protein uS3 family.</text>
</comment>
<proteinExistence type="inferred from homology"/>
<reference key="1">
    <citation type="journal article" date="2000" name="Mol. Gen. Genet.">
        <title>Complete nucleotide sequence of the Oenothera elata plastid chromosome, representing plastome I of the five distinguishable Euoenothera plastomes.</title>
        <authorList>
            <person name="Hupfer H."/>
            <person name="Swiatek M."/>
            <person name="Hornung S."/>
            <person name="Herrmann R.G."/>
            <person name="Maier R.M."/>
            <person name="Chiu W.-L."/>
            <person name="Sears B."/>
        </authorList>
    </citation>
    <scope>NUCLEOTIDE SEQUENCE [LARGE SCALE GENOMIC DNA]</scope>
    <source>
        <strain>cv. Johansen</strain>
    </source>
</reference>
<reference key="2">
    <citation type="journal article" date="2008" name="Nucleic Acids Res.">
        <title>The complete nucleotide sequences of the five genetically distinct plastid genomes of Oenothera, subsection Oenothera: I. Sequence evaluation and plastome evolution.</title>
        <authorList>
            <person name="Greiner S."/>
            <person name="Wang X."/>
            <person name="Rauwolf U."/>
            <person name="Silber M.V."/>
            <person name="Mayer K."/>
            <person name="Meurer J."/>
            <person name="Haberer G."/>
            <person name="Herrmann R.G."/>
        </authorList>
    </citation>
    <scope>SEQUENCE REVISION TO 17-23</scope>
</reference>
<accession>Q9MTI7</accession>
<evidence type="ECO:0000250" key="1"/>
<evidence type="ECO:0000305" key="2"/>
<sequence>MAQKINPLGFRLGTTQSHHSIWFAQPKDYSDGLQEDQKIRDCIQNYIQKNMQISSDSGVEGIARIEIRKRIDLIQVKIYMGFPKLLIEDGTRRIEELQRIVQKEINSVNRKINITITKITKPYGDPNILAEFIAGQLNNRVSFRKAIQKAIELAEQADTKGIRVQIGGRINGGEIARVLWMKEGRVPLQTIRAKIDYCVYTVRTIHGLLGIKIWIFRED</sequence>
<protein>
    <recommendedName>
        <fullName evidence="2">Small ribosomal subunit protein uS3c</fullName>
    </recommendedName>
    <alternativeName>
        <fullName>30S ribosomal protein S3, chloroplastic</fullName>
    </alternativeName>
</protein>
<keyword id="KW-0150">Chloroplast</keyword>
<keyword id="KW-0934">Plastid</keyword>
<keyword id="KW-0687">Ribonucleoprotein</keyword>
<keyword id="KW-0689">Ribosomal protein</keyword>
<keyword id="KW-0694">RNA-binding</keyword>
<keyword id="KW-0699">rRNA-binding</keyword>
<dbReference type="EMBL" id="AJ271079">
    <property type="protein sequence ID" value="CAB67198.2"/>
    <property type="molecule type" value="Genomic_DNA"/>
</dbReference>
<dbReference type="RefSeq" id="NP_084731.2">
    <property type="nucleotide sequence ID" value="NC_002693.2"/>
</dbReference>
<dbReference type="SMR" id="Q9MTI7"/>
<dbReference type="GeneID" id="802712"/>
<dbReference type="GO" id="GO:0009507">
    <property type="term" value="C:chloroplast"/>
    <property type="evidence" value="ECO:0007669"/>
    <property type="project" value="UniProtKB-SubCell"/>
</dbReference>
<dbReference type="GO" id="GO:0022627">
    <property type="term" value="C:cytosolic small ribosomal subunit"/>
    <property type="evidence" value="ECO:0007669"/>
    <property type="project" value="TreeGrafter"/>
</dbReference>
<dbReference type="GO" id="GO:0019843">
    <property type="term" value="F:rRNA binding"/>
    <property type="evidence" value="ECO:0007669"/>
    <property type="project" value="UniProtKB-UniRule"/>
</dbReference>
<dbReference type="GO" id="GO:0003735">
    <property type="term" value="F:structural constituent of ribosome"/>
    <property type="evidence" value="ECO:0007669"/>
    <property type="project" value="InterPro"/>
</dbReference>
<dbReference type="GO" id="GO:0006412">
    <property type="term" value="P:translation"/>
    <property type="evidence" value="ECO:0007669"/>
    <property type="project" value="UniProtKB-UniRule"/>
</dbReference>
<dbReference type="CDD" id="cd02412">
    <property type="entry name" value="KH-II_30S_S3"/>
    <property type="match status" value="1"/>
</dbReference>
<dbReference type="FunFam" id="3.30.1140.32:FF:000003">
    <property type="entry name" value="30S ribosomal protein S3, chloroplastic"/>
    <property type="match status" value="1"/>
</dbReference>
<dbReference type="FunFam" id="3.30.300.20:FF:000008">
    <property type="entry name" value="30S ribosomal protein S3, chloroplastic"/>
    <property type="match status" value="1"/>
</dbReference>
<dbReference type="Gene3D" id="3.30.300.20">
    <property type="match status" value="1"/>
</dbReference>
<dbReference type="Gene3D" id="3.30.1140.32">
    <property type="entry name" value="Ribosomal protein S3, C-terminal domain"/>
    <property type="match status" value="1"/>
</dbReference>
<dbReference type="HAMAP" id="MF_01309_B">
    <property type="entry name" value="Ribosomal_uS3_B"/>
    <property type="match status" value="1"/>
</dbReference>
<dbReference type="InterPro" id="IPR015946">
    <property type="entry name" value="KH_dom-like_a/b"/>
</dbReference>
<dbReference type="InterPro" id="IPR004044">
    <property type="entry name" value="KH_dom_type_2"/>
</dbReference>
<dbReference type="InterPro" id="IPR009019">
    <property type="entry name" value="KH_sf_prok-type"/>
</dbReference>
<dbReference type="InterPro" id="IPR036419">
    <property type="entry name" value="Ribosomal_S3_C_sf"/>
</dbReference>
<dbReference type="InterPro" id="IPR005704">
    <property type="entry name" value="Ribosomal_uS3_bac-typ"/>
</dbReference>
<dbReference type="InterPro" id="IPR001351">
    <property type="entry name" value="Ribosomal_uS3_C"/>
</dbReference>
<dbReference type="InterPro" id="IPR018280">
    <property type="entry name" value="Ribosomal_uS3_CS"/>
</dbReference>
<dbReference type="NCBIfam" id="TIGR01009">
    <property type="entry name" value="rpsC_bact"/>
    <property type="match status" value="1"/>
</dbReference>
<dbReference type="PANTHER" id="PTHR11760">
    <property type="entry name" value="30S/40S RIBOSOMAL PROTEIN S3"/>
    <property type="match status" value="1"/>
</dbReference>
<dbReference type="PANTHER" id="PTHR11760:SF19">
    <property type="entry name" value="SMALL RIBOSOMAL SUBUNIT PROTEIN US3C"/>
    <property type="match status" value="1"/>
</dbReference>
<dbReference type="Pfam" id="PF00189">
    <property type="entry name" value="Ribosomal_S3_C"/>
    <property type="match status" value="1"/>
</dbReference>
<dbReference type="SUPFAM" id="SSF54814">
    <property type="entry name" value="Prokaryotic type KH domain (KH-domain type II)"/>
    <property type="match status" value="1"/>
</dbReference>
<dbReference type="SUPFAM" id="SSF54821">
    <property type="entry name" value="Ribosomal protein S3 C-terminal domain"/>
    <property type="match status" value="1"/>
</dbReference>
<dbReference type="PROSITE" id="PS50823">
    <property type="entry name" value="KH_TYPE_2"/>
    <property type="match status" value="1"/>
</dbReference>
<dbReference type="PROSITE" id="PS00548">
    <property type="entry name" value="RIBOSOMAL_S3"/>
    <property type="match status" value="1"/>
</dbReference>
<organism>
    <name type="scientific">Oenothera elata subsp. hookeri</name>
    <name type="common">Hooker's evening primrose</name>
    <name type="synonym">Oenothera hookeri</name>
    <dbReference type="NCBI Taxonomy" id="85636"/>
    <lineage>
        <taxon>Eukaryota</taxon>
        <taxon>Viridiplantae</taxon>
        <taxon>Streptophyta</taxon>
        <taxon>Embryophyta</taxon>
        <taxon>Tracheophyta</taxon>
        <taxon>Spermatophyta</taxon>
        <taxon>Magnoliopsida</taxon>
        <taxon>eudicotyledons</taxon>
        <taxon>Gunneridae</taxon>
        <taxon>Pentapetalae</taxon>
        <taxon>rosids</taxon>
        <taxon>malvids</taxon>
        <taxon>Myrtales</taxon>
        <taxon>Onagraceae</taxon>
        <taxon>Onagroideae</taxon>
        <taxon>Onagreae</taxon>
        <taxon>Oenothera</taxon>
    </lineage>
</organism>
<feature type="chain" id="PRO_0000130293" description="Small ribosomal subunit protein uS3c">
    <location>
        <begin position="1"/>
        <end position="219"/>
    </location>
</feature>
<feature type="domain" description="KH type-2">
    <location>
        <begin position="43"/>
        <end position="120"/>
    </location>
</feature>